<feature type="chain" id="PRO_0000303875" description="Xaa-Pro dipeptidase">
    <location>
        <begin position="1"/>
        <end position="441"/>
    </location>
</feature>
<feature type="binding site" evidence="1">
    <location>
        <position position="244"/>
    </location>
    <ligand>
        <name>Mn(2+)</name>
        <dbReference type="ChEBI" id="CHEBI:29035"/>
        <label>2</label>
    </ligand>
</feature>
<feature type="binding site" evidence="1">
    <location>
        <position position="255"/>
    </location>
    <ligand>
        <name>Mn(2+)</name>
        <dbReference type="ChEBI" id="CHEBI:29035"/>
        <label>1</label>
    </ligand>
</feature>
<feature type="binding site" evidence="1">
    <location>
        <position position="255"/>
    </location>
    <ligand>
        <name>Mn(2+)</name>
        <dbReference type="ChEBI" id="CHEBI:29035"/>
        <label>2</label>
    </ligand>
</feature>
<feature type="binding site" evidence="1">
    <location>
        <position position="336"/>
    </location>
    <ligand>
        <name>Mn(2+)</name>
        <dbReference type="ChEBI" id="CHEBI:29035"/>
        <label>1</label>
    </ligand>
</feature>
<feature type="binding site" evidence="1">
    <location>
        <position position="381"/>
    </location>
    <ligand>
        <name>Mn(2+)</name>
        <dbReference type="ChEBI" id="CHEBI:29035"/>
        <label>1</label>
    </ligand>
</feature>
<feature type="binding site" evidence="1">
    <location>
        <position position="420"/>
    </location>
    <ligand>
        <name>Mn(2+)</name>
        <dbReference type="ChEBI" id="CHEBI:29035"/>
        <label>1</label>
    </ligand>
</feature>
<feature type="binding site" evidence="1">
    <location>
        <position position="420"/>
    </location>
    <ligand>
        <name>Mn(2+)</name>
        <dbReference type="ChEBI" id="CHEBI:29035"/>
        <label>2</label>
    </ligand>
</feature>
<protein>
    <recommendedName>
        <fullName evidence="1">Xaa-Pro dipeptidase</fullName>
        <shortName evidence="1">X-Pro dipeptidase</shortName>
        <ecNumber evidence="1">3.4.13.9</ecNumber>
    </recommendedName>
    <alternativeName>
        <fullName evidence="1">Imidodipeptidase</fullName>
    </alternativeName>
    <alternativeName>
        <fullName evidence="1">Proline dipeptidase</fullName>
        <shortName evidence="1">Prolidase</shortName>
    </alternativeName>
</protein>
<dbReference type="EC" id="3.4.13.9" evidence="1"/>
<dbReference type="EMBL" id="AM039952">
    <property type="protein sequence ID" value="CAJ25251.1"/>
    <property type="molecule type" value="Genomic_DNA"/>
</dbReference>
<dbReference type="RefSeq" id="WP_011348466.1">
    <property type="nucleotide sequence ID" value="NZ_CP017190.1"/>
</dbReference>
<dbReference type="SMR" id="Q3BPR2"/>
<dbReference type="STRING" id="456327.BJD11_05140"/>
<dbReference type="MEROPS" id="M24.003"/>
<dbReference type="KEGG" id="xcv:XCV3520"/>
<dbReference type="eggNOG" id="COG0006">
    <property type="taxonomic scope" value="Bacteria"/>
</dbReference>
<dbReference type="HOGENOM" id="CLU_050675_0_0_6"/>
<dbReference type="Proteomes" id="UP000007069">
    <property type="component" value="Chromosome"/>
</dbReference>
<dbReference type="GO" id="GO:0005829">
    <property type="term" value="C:cytosol"/>
    <property type="evidence" value="ECO:0007669"/>
    <property type="project" value="TreeGrafter"/>
</dbReference>
<dbReference type="GO" id="GO:0004177">
    <property type="term" value="F:aminopeptidase activity"/>
    <property type="evidence" value="ECO:0007669"/>
    <property type="project" value="TreeGrafter"/>
</dbReference>
<dbReference type="GO" id="GO:0046872">
    <property type="term" value="F:metal ion binding"/>
    <property type="evidence" value="ECO:0007669"/>
    <property type="project" value="UniProtKB-KW"/>
</dbReference>
<dbReference type="GO" id="GO:0008235">
    <property type="term" value="F:metalloexopeptidase activity"/>
    <property type="evidence" value="ECO:0007669"/>
    <property type="project" value="UniProtKB-UniRule"/>
</dbReference>
<dbReference type="GO" id="GO:0016795">
    <property type="term" value="F:phosphoric triester hydrolase activity"/>
    <property type="evidence" value="ECO:0007669"/>
    <property type="project" value="InterPro"/>
</dbReference>
<dbReference type="GO" id="GO:0102009">
    <property type="term" value="F:proline dipeptidase activity"/>
    <property type="evidence" value="ECO:0007669"/>
    <property type="project" value="UniProtKB-EC"/>
</dbReference>
<dbReference type="GO" id="GO:0006508">
    <property type="term" value="P:proteolysis"/>
    <property type="evidence" value="ECO:0007669"/>
    <property type="project" value="UniProtKB-KW"/>
</dbReference>
<dbReference type="CDD" id="cd01087">
    <property type="entry name" value="Prolidase"/>
    <property type="match status" value="1"/>
</dbReference>
<dbReference type="Gene3D" id="3.90.230.10">
    <property type="entry name" value="Creatinase/methionine aminopeptidase superfamily"/>
    <property type="match status" value="1"/>
</dbReference>
<dbReference type="Gene3D" id="3.40.350.10">
    <property type="entry name" value="Creatinase/prolidase N-terminal domain"/>
    <property type="match status" value="1"/>
</dbReference>
<dbReference type="HAMAP" id="MF_01279">
    <property type="entry name" value="X_Pro_dipeptid"/>
    <property type="match status" value="1"/>
</dbReference>
<dbReference type="InterPro" id="IPR029149">
    <property type="entry name" value="Creatin/AminoP/Spt16_N"/>
</dbReference>
<dbReference type="InterPro" id="IPR036005">
    <property type="entry name" value="Creatinase/aminopeptidase-like"/>
</dbReference>
<dbReference type="InterPro" id="IPR048819">
    <property type="entry name" value="PepQ_N"/>
</dbReference>
<dbReference type="InterPro" id="IPR000994">
    <property type="entry name" value="Pept_M24"/>
</dbReference>
<dbReference type="InterPro" id="IPR001131">
    <property type="entry name" value="Peptidase_M24B_aminopep-P_CS"/>
</dbReference>
<dbReference type="InterPro" id="IPR052433">
    <property type="entry name" value="X-Pro_dipept-like"/>
</dbReference>
<dbReference type="InterPro" id="IPR022846">
    <property type="entry name" value="X_Pro_dipept"/>
</dbReference>
<dbReference type="NCBIfam" id="NF010133">
    <property type="entry name" value="PRK13607.1"/>
    <property type="match status" value="1"/>
</dbReference>
<dbReference type="PANTHER" id="PTHR43226">
    <property type="entry name" value="XAA-PRO AMINOPEPTIDASE 3"/>
    <property type="match status" value="1"/>
</dbReference>
<dbReference type="PANTHER" id="PTHR43226:SF8">
    <property type="entry name" value="XAA-PRO DIPEPTIDASE"/>
    <property type="match status" value="1"/>
</dbReference>
<dbReference type="Pfam" id="PF21216">
    <property type="entry name" value="PepQ_N"/>
    <property type="match status" value="1"/>
</dbReference>
<dbReference type="Pfam" id="PF00557">
    <property type="entry name" value="Peptidase_M24"/>
    <property type="match status" value="1"/>
</dbReference>
<dbReference type="SUPFAM" id="SSF55920">
    <property type="entry name" value="Creatinase/aminopeptidase"/>
    <property type="match status" value="1"/>
</dbReference>
<dbReference type="PROSITE" id="PS00491">
    <property type="entry name" value="PROLINE_PEPTIDASE"/>
    <property type="match status" value="1"/>
</dbReference>
<proteinExistence type="inferred from homology"/>
<organism>
    <name type="scientific">Xanthomonas euvesicatoria pv. vesicatoria (strain 85-10)</name>
    <name type="common">Xanthomonas campestris pv. vesicatoria</name>
    <dbReference type="NCBI Taxonomy" id="316273"/>
    <lineage>
        <taxon>Bacteria</taxon>
        <taxon>Pseudomonadati</taxon>
        <taxon>Pseudomonadota</taxon>
        <taxon>Gammaproteobacteria</taxon>
        <taxon>Lysobacterales</taxon>
        <taxon>Lysobacteraceae</taxon>
        <taxon>Xanthomonas</taxon>
    </lineage>
</organism>
<gene>
    <name evidence="1" type="primary">pepQ</name>
    <name type="ordered locus">XCV3520</name>
</gene>
<sequence length="441" mass="48487">MPQPSLSSLYSDHLRTLTARADEALQRGGFEHLVVPSGSTHYQLFDDRDYPYAVNPQFKAWVPLTRVPNSWLVYTPGKRPTVIFYQPFDYWHVVPDAPSGWWVDHCDIHIIRTPEQALALLPKHAERCAILGEPQSTLGAYVPNNPQPVLDYLEYQRAFKTPYELALLRIAQQLAVRGHRAAEAAFRAGQSEFGIHMAYCAAVGQDANDLPYGNIIALNEHGAVLHYTELGQQPPQPLRSFLIDAGASAYGYASDITRTYAADPGSDFQALIDAVDAAQLRMGQNVRAGVDYKQLHIEAHLALMGILKEFGVLTVSPEAALATGVSAAFFPHGLGHLIGLQVHDVAGFAASDRGGRIERPAGHPYLRLTRVLEPGMVVTIEPGVYFIDMLLDEVKKNGHAASVNWQRVEAFKPYGGIRIEDEVVCTDGSAENLTRPVFASA</sequence>
<comment type="function">
    <text evidence="1">Splits dipeptides with a prolyl residue in the C-terminal position.</text>
</comment>
<comment type="catalytic activity">
    <reaction evidence="1">
        <text>Xaa-L-Pro dipeptide + H2O = an L-alpha-amino acid + L-proline</text>
        <dbReference type="Rhea" id="RHEA:76407"/>
        <dbReference type="ChEBI" id="CHEBI:15377"/>
        <dbReference type="ChEBI" id="CHEBI:59869"/>
        <dbReference type="ChEBI" id="CHEBI:60039"/>
        <dbReference type="ChEBI" id="CHEBI:195196"/>
        <dbReference type="EC" id="3.4.13.9"/>
    </reaction>
</comment>
<comment type="cofactor">
    <cofactor evidence="1">
        <name>Mn(2+)</name>
        <dbReference type="ChEBI" id="CHEBI:29035"/>
    </cofactor>
    <text evidence="1">Binds 2 manganese ions per subunit.</text>
</comment>
<comment type="similarity">
    <text evidence="1">Belongs to the peptidase M24B family. Bacterial-type prolidase subfamily.</text>
</comment>
<keyword id="KW-0224">Dipeptidase</keyword>
<keyword id="KW-0378">Hydrolase</keyword>
<keyword id="KW-0464">Manganese</keyword>
<keyword id="KW-0479">Metal-binding</keyword>
<keyword id="KW-0482">Metalloprotease</keyword>
<keyword id="KW-0645">Protease</keyword>
<reference key="1">
    <citation type="journal article" date="2005" name="J. Bacteriol.">
        <title>Insights into genome plasticity and pathogenicity of the plant pathogenic Bacterium Xanthomonas campestris pv. vesicatoria revealed by the complete genome sequence.</title>
        <authorList>
            <person name="Thieme F."/>
            <person name="Koebnik R."/>
            <person name="Bekel T."/>
            <person name="Berger C."/>
            <person name="Boch J."/>
            <person name="Buettner D."/>
            <person name="Caldana C."/>
            <person name="Gaigalat L."/>
            <person name="Goesmann A."/>
            <person name="Kay S."/>
            <person name="Kirchner O."/>
            <person name="Lanz C."/>
            <person name="Linke B."/>
            <person name="McHardy A.C."/>
            <person name="Meyer F."/>
            <person name="Mittenhuber G."/>
            <person name="Nies D.H."/>
            <person name="Niesbach-Kloesgen U."/>
            <person name="Patschkowski T."/>
            <person name="Rueckert C."/>
            <person name="Rupp O."/>
            <person name="Schneiker S."/>
            <person name="Schuster S.C."/>
            <person name="Vorhoelter F.J."/>
            <person name="Weber E."/>
            <person name="Puehler A."/>
            <person name="Bonas U."/>
            <person name="Bartels D."/>
            <person name="Kaiser O."/>
        </authorList>
    </citation>
    <scope>NUCLEOTIDE SEQUENCE [LARGE SCALE GENOMIC DNA]</scope>
    <source>
        <strain>85-10</strain>
    </source>
</reference>
<evidence type="ECO:0000255" key="1">
    <source>
        <dbReference type="HAMAP-Rule" id="MF_01279"/>
    </source>
</evidence>
<name>PEPQ_XANE5</name>
<accession>Q3BPR2</accession>